<keyword id="KW-0002">3D-structure</keyword>
<keyword id="KW-1015">Disulfide bond</keyword>
<keyword id="KW-0325">Glycoprotein</keyword>
<keyword id="KW-1185">Reference proteome</keyword>
<keyword id="KW-0964">Secreted</keyword>
<keyword id="KW-0730">Sialic acid</keyword>
<keyword id="KW-0732">Signal</keyword>
<keyword id="KW-0770">Synapse</keyword>
<comment type="function">
    <text evidence="6 9 10 12 13">Acts as a synaptic organizer in specific subsets of neurons in the brain (PubMed:29691328). Essential for the formation and maintenance of inhibitory GABAergic synapses (PubMed:25534236). Promotes the development of dendrite-targeting inhibitory GABAergic synapses made by somatostatin-positive interneurons (PubMed:30679375). May contribute to the function of ventral medial habenula region of the brain implicated in the regulation of anxiety-related behaviors (PubMed:30287486). May play a role in CBLN3 export from the endoplasmic reticulum and secretion (PubMed:17030622).</text>
</comment>
<comment type="subunit">
    <text evidence="2 6 8 11">Homohexamer; disulfide-linked homotrimers. The trimers are assembled via the globular C1q domains. The trimers associate via N-terminal cysteine residues to form disulfide-linked hexamers (By similarity). May form oligomers with CBLN1, CBLN2 and CBLN3 prior to secretion (PubMed:17030622, PubMed:29782851). Once secreted, does not interact with other CBLN family members (PubMed:17030622). Strongly interacts with DCC in a NTN1-displaceable fashion (PubMed:22220752, PubMed:29782851). Weakly binds to NRXN1 and NRXN2 long and short isoforms produced by alternative promoter usage (PubMed:22220752, PubMed:29782851). Interaction with NRXN3 short isoform is hardly detectable; no interaction at all with NRXN3 long isoform (PubMed:22220752, PubMed:29782851). Does not interact with NEO1, GRID1 and GRID2 (PubMed:22220752, PubMed:29782851).</text>
</comment>
<comment type="subcellular location">
    <subcellularLocation>
        <location evidence="6 7 11">Secreted</location>
    </subcellularLocation>
    <subcellularLocation>
        <location evidence="9">Synapse</location>
    </subcellularLocation>
    <text evidence="9">Detected at GABAergic synapses.</text>
</comment>
<comment type="tissue specificity">
    <text evidence="5 8 9 12">Expressed in brain with high levels in particular thalamic nuclei. In the thalamus, predominantly expressed in neurons within the parafascicular nucleus. Found in the hippocampus, mostly in the dendrites and somata of pyramidal neurons (at protein level). Very low or no expression in most other brain regions. Highly expressed in the ventral medial habenula.</text>
</comment>
<comment type="developmental stage">
    <text evidence="5 13">In the developing brain, expressed as early as 10-13 dpc. Expression level peaks at 18 dpc and gradually decreases afterwards. Expressed in developing somatostatin-positive basket cells.</text>
</comment>
<comment type="PTM">
    <text evidence="11">Sialoglycoprotein.</text>
</comment>
<comment type="disruption phenotype">
    <text evidence="8 10 12">Mutant animals are fertile, have normal life spans and have no overt anatomical abnormalities (PubMed:22220752). They have a normal corpus callosum, hippocampal commisure and pontine nucleus and no other gross neuroanatomical abnormalities (PubMed:22220752). Mice exhibit increased anxiety-related behavior (PubMed:30287486). Triple CBLN1, CBLN2 and CBLN4 knockout mice exhibit impairments in sensory processing and sensorimotor gating, in addition to severe motor deficits, seizures and reduced synapse density in the hippocampus of aging mice (PubMed:29691328).</text>
</comment>
<proteinExistence type="evidence at protein level"/>
<reference key="1">
    <citation type="journal article" date="2002" name="Gene Expr. Patterns">
        <title>Sexually dimorphic gene expression in the developing mouse gonad.</title>
        <authorList>
            <person name="Menke D.B."/>
            <person name="Page D.C."/>
        </authorList>
    </citation>
    <scope>NUCLEOTIDE SEQUENCE [MRNA]</scope>
    <source>
        <strain>C57BL/6J</strain>
        <tissue>Testis</tissue>
    </source>
</reference>
<reference key="2">
    <citation type="journal article" date="2005" name="Science">
        <title>The transcriptional landscape of the mammalian genome.</title>
        <authorList>
            <person name="Carninci P."/>
            <person name="Kasukawa T."/>
            <person name="Katayama S."/>
            <person name="Gough J."/>
            <person name="Frith M.C."/>
            <person name="Maeda N."/>
            <person name="Oyama R."/>
            <person name="Ravasi T."/>
            <person name="Lenhard B."/>
            <person name="Wells C."/>
            <person name="Kodzius R."/>
            <person name="Shimokawa K."/>
            <person name="Bajic V.B."/>
            <person name="Brenner S.E."/>
            <person name="Batalov S."/>
            <person name="Forrest A.R."/>
            <person name="Zavolan M."/>
            <person name="Davis M.J."/>
            <person name="Wilming L.G."/>
            <person name="Aidinis V."/>
            <person name="Allen J.E."/>
            <person name="Ambesi-Impiombato A."/>
            <person name="Apweiler R."/>
            <person name="Aturaliya R.N."/>
            <person name="Bailey T.L."/>
            <person name="Bansal M."/>
            <person name="Baxter L."/>
            <person name="Beisel K.W."/>
            <person name="Bersano T."/>
            <person name="Bono H."/>
            <person name="Chalk A.M."/>
            <person name="Chiu K.P."/>
            <person name="Choudhary V."/>
            <person name="Christoffels A."/>
            <person name="Clutterbuck D.R."/>
            <person name="Crowe M.L."/>
            <person name="Dalla E."/>
            <person name="Dalrymple B.P."/>
            <person name="de Bono B."/>
            <person name="Della Gatta G."/>
            <person name="di Bernardo D."/>
            <person name="Down T."/>
            <person name="Engstrom P."/>
            <person name="Fagiolini M."/>
            <person name="Faulkner G."/>
            <person name="Fletcher C.F."/>
            <person name="Fukushima T."/>
            <person name="Furuno M."/>
            <person name="Futaki S."/>
            <person name="Gariboldi M."/>
            <person name="Georgii-Hemming P."/>
            <person name="Gingeras T.R."/>
            <person name="Gojobori T."/>
            <person name="Green R.E."/>
            <person name="Gustincich S."/>
            <person name="Harbers M."/>
            <person name="Hayashi Y."/>
            <person name="Hensch T.K."/>
            <person name="Hirokawa N."/>
            <person name="Hill D."/>
            <person name="Huminiecki L."/>
            <person name="Iacono M."/>
            <person name="Ikeo K."/>
            <person name="Iwama A."/>
            <person name="Ishikawa T."/>
            <person name="Jakt M."/>
            <person name="Kanapin A."/>
            <person name="Katoh M."/>
            <person name="Kawasawa Y."/>
            <person name="Kelso J."/>
            <person name="Kitamura H."/>
            <person name="Kitano H."/>
            <person name="Kollias G."/>
            <person name="Krishnan S.P."/>
            <person name="Kruger A."/>
            <person name="Kummerfeld S.K."/>
            <person name="Kurochkin I.V."/>
            <person name="Lareau L.F."/>
            <person name="Lazarevic D."/>
            <person name="Lipovich L."/>
            <person name="Liu J."/>
            <person name="Liuni S."/>
            <person name="McWilliam S."/>
            <person name="Madan Babu M."/>
            <person name="Madera M."/>
            <person name="Marchionni L."/>
            <person name="Matsuda H."/>
            <person name="Matsuzawa S."/>
            <person name="Miki H."/>
            <person name="Mignone F."/>
            <person name="Miyake S."/>
            <person name="Morris K."/>
            <person name="Mottagui-Tabar S."/>
            <person name="Mulder N."/>
            <person name="Nakano N."/>
            <person name="Nakauchi H."/>
            <person name="Ng P."/>
            <person name="Nilsson R."/>
            <person name="Nishiguchi S."/>
            <person name="Nishikawa S."/>
            <person name="Nori F."/>
            <person name="Ohara O."/>
            <person name="Okazaki Y."/>
            <person name="Orlando V."/>
            <person name="Pang K.C."/>
            <person name="Pavan W.J."/>
            <person name="Pavesi G."/>
            <person name="Pesole G."/>
            <person name="Petrovsky N."/>
            <person name="Piazza S."/>
            <person name="Reed J."/>
            <person name="Reid J.F."/>
            <person name="Ring B.Z."/>
            <person name="Ringwald M."/>
            <person name="Rost B."/>
            <person name="Ruan Y."/>
            <person name="Salzberg S.L."/>
            <person name="Sandelin A."/>
            <person name="Schneider C."/>
            <person name="Schoenbach C."/>
            <person name="Sekiguchi K."/>
            <person name="Semple C.A."/>
            <person name="Seno S."/>
            <person name="Sessa L."/>
            <person name="Sheng Y."/>
            <person name="Shibata Y."/>
            <person name="Shimada H."/>
            <person name="Shimada K."/>
            <person name="Silva D."/>
            <person name="Sinclair B."/>
            <person name="Sperling S."/>
            <person name="Stupka E."/>
            <person name="Sugiura K."/>
            <person name="Sultana R."/>
            <person name="Takenaka Y."/>
            <person name="Taki K."/>
            <person name="Tammoja K."/>
            <person name="Tan S.L."/>
            <person name="Tang S."/>
            <person name="Taylor M.S."/>
            <person name="Tegner J."/>
            <person name="Teichmann S.A."/>
            <person name="Ueda H.R."/>
            <person name="van Nimwegen E."/>
            <person name="Verardo R."/>
            <person name="Wei C.L."/>
            <person name="Yagi K."/>
            <person name="Yamanishi H."/>
            <person name="Zabarovsky E."/>
            <person name="Zhu S."/>
            <person name="Zimmer A."/>
            <person name="Hide W."/>
            <person name="Bult C."/>
            <person name="Grimmond S.M."/>
            <person name="Teasdale R.D."/>
            <person name="Liu E.T."/>
            <person name="Brusic V."/>
            <person name="Quackenbush J."/>
            <person name="Wahlestedt C."/>
            <person name="Mattick J.S."/>
            <person name="Hume D.A."/>
            <person name="Kai C."/>
            <person name="Sasaki D."/>
            <person name="Tomaru Y."/>
            <person name="Fukuda S."/>
            <person name="Kanamori-Katayama M."/>
            <person name="Suzuki M."/>
            <person name="Aoki J."/>
            <person name="Arakawa T."/>
            <person name="Iida J."/>
            <person name="Imamura K."/>
            <person name="Itoh M."/>
            <person name="Kato T."/>
            <person name="Kawaji H."/>
            <person name="Kawagashira N."/>
            <person name="Kawashima T."/>
            <person name="Kojima M."/>
            <person name="Kondo S."/>
            <person name="Konno H."/>
            <person name="Nakano K."/>
            <person name="Ninomiya N."/>
            <person name="Nishio T."/>
            <person name="Okada M."/>
            <person name="Plessy C."/>
            <person name="Shibata K."/>
            <person name="Shiraki T."/>
            <person name="Suzuki S."/>
            <person name="Tagami M."/>
            <person name="Waki K."/>
            <person name="Watahiki A."/>
            <person name="Okamura-Oho Y."/>
            <person name="Suzuki H."/>
            <person name="Kawai J."/>
            <person name="Hayashizaki Y."/>
        </authorList>
    </citation>
    <scope>NUCLEOTIDE SEQUENCE [LARGE SCALE MRNA]</scope>
    <source>
        <strain>C57BL/6J</strain>
        <tissue>Olfactory bulb</tissue>
    </source>
</reference>
<reference key="3">
    <citation type="submission" date="2005-07" db="EMBL/GenBank/DDBJ databases">
        <authorList>
            <person name="Mural R.J."/>
            <person name="Adams M.D."/>
            <person name="Myers E.W."/>
            <person name="Smith H.O."/>
            <person name="Venter J.C."/>
        </authorList>
    </citation>
    <scope>NUCLEOTIDE SEQUENCE [LARGE SCALE GENOMIC DNA]</scope>
</reference>
<reference key="4">
    <citation type="journal article" date="2004" name="Genome Res.">
        <title>The status, quality, and expansion of the NIH full-length cDNA project: the Mammalian Gene Collection (MGC).</title>
        <authorList>
            <consortium name="The MGC Project Team"/>
        </authorList>
    </citation>
    <scope>NUCLEOTIDE SEQUENCE [LARGE SCALE MRNA]</scope>
    <source>
        <strain>C57BL/6J</strain>
        <tissue>Brain</tissue>
        <tissue>Embryonic brain</tissue>
    </source>
</reference>
<reference key="5">
    <citation type="journal article" date="2006" name="Eur. J. Neurosci.">
        <title>Distinct expression of Cbln family mRNAs in developing and adult mouse brains.</title>
        <authorList>
            <person name="Miura E."/>
            <person name="Iijima T."/>
            <person name="Yuzaki M."/>
            <person name="Watanabe M."/>
        </authorList>
    </citation>
    <scope>TISSUE SPECIFICITY</scope>
    <scope>DEVELOPMENTAL STAGE</scope>
</reference>
<reference key="6">
    <citation type="journal article" date="2006" name="Mol. Cell. Biol.">
        <title>Cbln1 is essential for interaction-dependent secretion of cbln3.</title>
        <authorList>
            <person name="Bao D."/>
            <person name="Pang Z."/>
            <person name="Morgan M.A."/>
            <person name="Parris J."/>
            <person name="Rong Y."/>
            <person name="Li L."/>
            <person name="Morgan J.I."/>
        </authorList>
    </citation>
    <scope>FUNCTION</scope>
    <scope>SELF-ASSOCIATION</scope>
    <scope>SUBCELLULAR LOCATION</scope>
    <scope>INTERACTION WITH CBLN1; CBLN2 AND CBLN3</scope>
</reference>
<reference key="7">
    <citation type="journal article" date="2007" name="Eur. J. Neurosci.">
        <title>Characterization of a transneuronal cytokine family Cbln - regulation of secretion by heteromeric assembly.</title>
        <authorList>
            <person name="Iijima T."/>
            <person name="Miura E."/>
            <person name="Matsuda K."/>
            <person name="Kamekawa Y."/>
            <person name="Watanabe M."/>
            <person name="Yuzaki M."/>
        </authorList>
    </citation>
    <scope>OLIGOMERIZATION WITH CBLN1; CBLN2; CBLN3 AND CBLN4</scope>
    <scope>SUBCELLULAR LOCATION</scope>
    <scope>GLYCOSYLATION AT ASN-26 AND ASN-85</scope>
    <scope>MUTAGENESIS OF ASN-26 AND ASN-85</scope>
</reference>
<reference key="8">
    <citation type="journal article" date="2012" name="J. Neurochem.">
        <title>The Cbln family of proteins interact with multiple signaling pathways.</title>
        <authorList>
            <person name="Wei P."/>
            <person name="Pattarini R."/>
            <person name="Rong Y."/>
            <person name="Guo H."/>
            <person name="Bansal P.K."/>
            <person name="Kusnoor S.V."/>
            <person name="Deutch A.Y."/>
            <person name="Parris J."/>
            <person name="Morgan J.I."/>
        </authorList>
    </citation>
    <scope>INTERACTION WITH DCC; NRXN1; NRXN2 AND NRXN3</scope>
    <scope>LACK OF INTERACTION WITH GRID1 AND GRID2</scope>
    <scope>TISSUE SPECIFICITY</scope>
    <scope>DISRUPTION PHENOTYPE</scope>
</reference>
<reference key="9">
    <citation type="journal article" date="2015" name="Neurobiol. Aging">
        <title>Cerebellin 4, a synaptic protein, enhances inhibitory activity and resistance of neurons to amyloid-beta toxicity.</title>
        <authorList>
            <person name="Chacon P.J."/>
            <person name="del Marco A."/>
            <person name="Arevalo A."/>
            <person name="Dominguez-Gimenez P."/>
            <person name="Garcia-Segura L.M."/>
            <person name="Rodriguez-Tebar A."/>
        </authorList>
    </citation>
    <scope>FUNCTION</scope>
    <scope>SUBCELLULAR LOCATION</scope>
    <scope>TISSUE SPECIFICITY</scope>
</reference>
<reference key="10">
    <citation type="journal article" date="2018" name="Brain Res.">
        <title>Glycosylation of Cblns attenuates their receptor binding.</title>
        <authorList>
            <person name="Rong Y."/>
            <person name="Bansal P.K."/>
            <person name="Wei P."/>
            <person name="Guo H."/>
            <person name="Correia K."/>
            <person name="Parris J."/>
            <person name="Morgan J.I."/>
        </authorList>
    </citation>
    <scope>GLYCOSYLATION AT ASN-26 AND ASN-85</scope>
    <scope>INTERACTION WITH NRXN1; NRXN3 AND DCC</scope>
    <scope>LACK OF INTERACTION WITH NEO1; GRID1 AND GRID2</scope>
    <scope>SUBUNIT</scope>
    <scope>SUBCELLULAR LOCATION</scope>
    <scope>MUTAGENESIS OF ASN-26 AND ASN-85</scope>
</reference>
<reference key="11">
    <citation type="journal article" date="2018" name="J. Neurosci.">
        <title>Genetic Ablation of All Cerebellins Reveals Synapse Organizer Functions in Multiple Regions Throughout the Brain.</title>
        <authorList>
            <person name="Seigneur E."/>
            <person name="Suedhof T.C."/>
        </authorList>
    </citation>
    <scope>FUNCTION</scope>
    <scope>DISRUPTION PHENOTYPE</scope>
</reference>
<reference key="12">
    <citation type="journal article" date="2018" name="Proc. Natl. Acad. Sci. U.S.A.">
        <title>Cbln2 and Cbln4 are expressed in distinct medial habenula-interpeduncular projections and contribute to different behavioral outputs.</title>
        <authorList>
            <person name="Seigneur E."/>
            <person name="Polepalli J.S."/>
            <person name="Suedhof T.C."/>
        </authorList>
    </citation>
    <scope>FUNCTION</scope>
    <scope>DISRUPTION PHENOTYPE</scope>
    <scope>TISSUE SPECIFICITY</scope>
</reference>
<reference key="13">
    <citation type="journal article" date="2019" name="Science">
        <title>Distinct molecular programs regulate synapse specificity in cortical inhibitory circuits.</title>
        <authorList>
            <person name="Favuzzi E."/>
            <person name="Deogracias R."/>
            <person name="Marques-Smith A."/>
            <person name="Maeso P."/>
            <person name="Jezequel J."/>
            <person name="Exposito-Alonso D."/>
            <person name="Balia M."/>
            <person name="Kroon T."/>
            <person name="Hinojosa A.J."/>
            <person name="Maraver E.F."/>
            <person name="Rico B."/>
        </authorList>
    </citation>
    <scope>FUNCTION</scope>
    <scope>DEVELOPMENTAL STAGE</scope>
</reference>
<sequence length="198" mass="21609">MGSARRALSVVPAVLLILVLPVWAQNDTEPIVLEGKCLVVCDSNPATDSKGSSSSPLGISVRAANSKVAFSAVRSTNHEPSEMSNKTRIIYFDQILVNVGNFFTLESVFVAPRKGIYSFSFHVIKVYQSQTIQVNLMLNGKPVISAFAGDKDVTREAATNGVLLYLDKEDKVYLKLEKGNLLGGWQYSTFSGFLVFPL</sequence>
<evidence type="ECO:0000250" key="1"/>
<evidence type="ECO:0000250" key="2">
    <source>
        <dbReference type="UniProtKB" id="Q9R171"/>
    </source>
</evidence>
<evidence type="ECO:0000255" key="3"/>
<evidence type="ECO:0000255" key="4">
    <source>
        <dbReference type="PROSITE-ProRule" id="PRU00368"/>
    </source>
</evidence>
<evidence type="ECO:0000269" key="5">
    <source>
    </source>
</evidence>
<evidence type="ECO:0000269" key="6">
    <source>
    </source>
</evidence>
<evidence type="ECO:0000269" key="7">
    <source>
    </source>
</evidence>
<evidence type="ECO:0000269" key="8">
    <source>
    </source>
</evidence>
<evidence type="ECO:0000269" key="9">
    <source>
    </source>
</evidence>
<evidence type="ECO:0000269" key="10">
    <source>
    </source>
</evidence>
<evidence type="ECO:0000269" key="11">
    <source>
    </source>
</evidence>
<evidence type="ECO:0000269" key="12">
    <source>
    </source>
</evidence>
<evidence type="ECO:0000269" key="13">
    <source>
    </source>
</evidence>
<evidence type="ECO:0000305" key="14"/>
<evidence type="ECO:0007829" key="15">
    <source>
        <dbReference type="PDB" id="5H4B"/>
    </source>
</evidence>
<dbReference type="EMBL" id="AY134663">
    <property type="protein sequence ID" value="AAN08614.1"/>
    <property type="molecule type" value="mRNA"/>
</dbReference>
<dbReference type="EMBL" id="AK032406">
    <property type="protein sequence ID" value="BAC27855.1"/>
    <property type="molecule type" value="mRNA"/>
</dbReference>
<dbReference type="EMBL" id="AK032621">
    <property type="protein sequence ID" value="BAC27954.1"/>
    <property type="molecule type" value="mRNA"/>
</dbReference>
<dbReference type="EMBL" id="CH466551">
    <property type="protein sequence ID" value="EDL06594.1"/>
    <property type="molecule type" value="Genomic_DNA"/>
</dbReference>
<dbReference type="EMBL" id="BC094540">
    <property type="protein sequence ID" value="AAH94540.1"/>
    <property type="molecule type" value="mRNA"/>
</dbReference>
<dbReference type="EMBL" id="BC132025">
    <property type="protein sequence ID" value="AAI32026.1"/>
    <property type="molecule type" value="mRNA"/>
</dbReference>
<dbReference type="EMBL" id="BC132027">
    <property type="protein sequence ID" value="AAI32028.1"/>
    <property type="molecule type" value="mRNA"/>
</dbReference>
<dbReference type="CCDS" id="CCDS17126.1"/>
<dbReference type="RefSeq" id="NP_783439.1">
    <property type="nucleotide sequence ID" value="NM_175631.3"/>
</dbReference>
<dbReference type="PDB" id="5H4B">
    <property type="method" value="X-ray"/>
    <property type="resolution" value="2.80 A"/>
    <property type="chains" value="A=25-198"/>
</dbReference>
<dbReference type="PDBsum" id="5H4B"/>
<dbReference type="SMR" id="Q8BME9"/>
<dbReference type="BioGRID" id="230797">
    <property type="interactions" value="2"/>
</dbReference>
<dbReference type="FunCoup" id="Q8BME9">
    <property type="interactions" value="86"/>
</dbReference>
<dbReference type="STRING" id="10090.ENSMUSP00000085263"/>
<dbReference type="GlyConnect" id="2207">
    <property type="glycosylation" value="2 N-Linked glycans (1 site)"/>
</dbReference>
<dbReference type="GlyCosmos" id="Q8BME9">
    <property type="glycosylation" value="2 sites, 2 glycans"/>
</dbReference>
<dbReference type="GlyGen" id="Q8BME9">
    <property type="glycosylation" value="2 sites, 4 N-linked glycans (2 sites)"/>
</dbReference>
<dbReference type="iPTMnet" id="Q8BME9"/>
<dbReference type="PhosphoSitePlus" id="Q8BME9"/>
<dbReference type="PaxDb" id="10090-ENSMUSP00000085263"/>
<dbReference type="ProteomicsDB" id="265345"/>
<dbReference type="Antibodypedia" id="28817">
    <property type="antibodies" value="111 antibodies from 27 providers"/>
</dbReference>
<dbReference type="DNASU" id="228942"/>
<dbReference type="Ensembl" id="ENSMUST00000087950.4">
    <property type="protein sequence ID" value="ENSMUSP00000085263.4"/>
    <property type="gene ID" value="ENSMUSG00000067578.4"/>
</dbReference>
<dbReference type="GeneID" id="228942"/>
<dbReference type="KEGG" id="mmu:228942"/>
<dbReference type="UCSC" id="uc008ock.1">
    <property type="organism name" value="mouse"/>
</dbReference>
<dbReference type="AGR" id="MGI:2154433"/>
<dbReference type="CTD" id="140689"/>
<dbReference type="MGI" id="MGI:2154433">
    <property type="gene designation" value="Cbln4"/>
</dbReference>
<dbReference type="VEuPathDB" id="HostDB:ENSMUSG00000067578"/>
<dbReference type="eggNOG" id="ENOG502QV08">
    <property type="taxonomic scope" value="Eukaryota"/>
</dbReference>
<dbReference type="GeneTree" id="ENSGT00940000159728"/>
<dbReference type="HOGENOM" id="CLU_001074_8_2_1"/>
<dbReference type="InParanoid" id="Q8BME9"/>
<dbReference type="OMA" id="PAMDWRS"/>
<dbReference type="OrthoDB" id="10070467at2759"/>
<dbReference type="PhylomeDB" id="Q8BME9"/>
<dbReference type="TreeFam" id="TF329591"/>
<dbReference type="BioGRID-ORCS" id="228942">
    <property type="hits" value="1 hit in 76 CRISPR screens"/>
</dbReference>
<dbReference type="PRO" id="PR:Q8BME9"/>
<dbReference type="Proteomes" id="UP000000589">
    <property type="component" value="Chromosome 2"/>
</dbReference>
<dbReference type="RNAct" id="Q8BME9">
    <property type="molecule type" value="protein"/>
</dbReference>
<dbReference type="Bgee" id="ENSMUSG00000067578">
    <property type="expression patterns" value="Expressed in habenula and 97 other cell types or tissues"/>
</dbReference>
<dbReference type="GO" id="GO:0005576">
    <property type="term" value="C:extracellular region"/>
    <property type="evidence" value="ECO:0000314"/>
    <property type="project" value="UniProtKB"/>
</dbReference>
<dbReference type="GO" id="GO:0005615">
    <property type="term" value="C:extracellular space"/>
    <property type="evidence" value="ECO:0000314"/>
    <property type="project" value="MGI"/>
</dbReference>
<dbReference type="GO" id="GO:0098982">
    <property type="term" value="C:GABA-ergic synapse"/>
    <property type="evidence" value="ECO:0000314"/>
    <property type="project" value="UniProtKB"/>
</dbReference>
<dbReference type="GO" id="GO:0098978">
    <property type="term" value="C:glutamatergic synapse"/>
    <property type="evidence" value="ECO:0000314"/>
    <property type="project" value="SynGO"/>
</dbReference>
<dbReference type="GO" id="GO:0043083">
    <property type="term" value="C:synaptic cleft"/>
    <property type="evidence" value="ECO:0000314"/>
    <property type="project" value="SynGO"/>
</dbReference>
<dbReference type="GO" id="GO:1904862">
    <property type="term" value="P:inhibitory synapse assembly"/>
    <property type="evidence" value="ECO:0000315"/>
    <property type="project" value="UniProtKB"/>
</dbReference>
<dbReference type="GO" id="GO:0009306">
    <property type="term" value="P:protein secretion"/>
    <property type="evidence" value="ECO:0000314"/>
    <property type="project" value="MGI"/>
</dbReference>
<dbReference type="GO" id="GO:0099550">
    <property type="term" value="P:trans-synaptic signaling, modulating synaptic transmission"/>
    <property type="evidence" value="ECO:0000314"/>
    <property type="project" value="SynGO"/>
</dbReference>
<dbReference type="FunFam" id="2.60.120.40:FF:000002">
    <property type="entry name" value="Cerebellin 4"/>
    <property type="match status" value="1"/>
</dbReference>
<dbReference type="Gene3D" id="2.60.120.40">
    <property type="match status" value="1"/>
</dbReference>
<dbReference type="InterPro" id="IPR001073">
    <property type="entry name" value="C1q_dom"/>
</dbReference>
<dbReference type="InterPro" id="IPR050822">
    <property type="entry name" value="Cerebellin_Synaptic_Org"/>
</dbReference>
<dbReference type="InterPro" id="IPR008983">
    <property type="entry name" value="Tumour_necrosis_fac-like_dom"/>
</dbReference>
<dbReference type="PANTHER" id="PTHR22923:SF3">
    <property type="entry name" value="CEREBELLIN-4"/>
    <property type="match status" value="1"/>
</dbReference>
<dbReference type="PANTHER" id="PTHR22923">
    <property type="entry name" value="CEREBELLIN-RELATED"/>
    <property type="match status" value="1"/>
</dbReference>
<dbReference type="Pfam" id="PF00386">
    <property type="entry name" value="C1q"/>
    <property type="match status" value="1"/>
</dbReference>
<dbReference type="PRINTS" id="PR00007">
    <property type="entry name" value="COMPLEMNTC1Q"/>
</dbReference>
<dbReference type="SMART" id="SM00110">
    <property type="entry name" value="C1Q"/>
    <property type="match status" value="1"/>
</dbReference>
<dbReference type="SUPFAM" id="SSF49842">
    <property type="entry name" value="TNF-like"/>
    <property type="match status" value="1"/>
</dbReference>
<dbReference type="PROSITE" id="PS50871">
    <property type="entry name" value="C1Q"/>
    <property type="match status" value="1"/>
</dbReference>
<name>CBLN4_MOUSE</name>
<gene>
    <name type="primary">Cbln4</name>
    <name type="synonym">Cblnl1</name>
</gene>
<organism>
    <name type="scientific">Mus musculus</name>
    <name type="common">Mouse</name>
    <dbReference type="NCBI Taxonomy" id="10090"/>
    <lineage>
        <taxon>Eukaryota</taxon>
        <taxon>Metazoa</taxon>
        <taxon>Chordata</taxon>
        <taxon>Craniata</taxon>
        <taxon>Vertebrata</taxon>
        <taxon>Euteleostomi</taxon>
        <taxon>Mammalia</taxon>
        <taxon>Eutheria</taxon>
        <taxon>Euarchontoglires</taxon>
        <taxon>Glires</taxon>
        <taxon>Rodentia</taxon>
        <taxon>Myomorpha</taxon>
        <taxon>Muroidea</taxon>
        <taxon>Muridae</taxon>
        <taxon>Murinae</taxon>
        <taxon>Mus</taxon>
        <taxon>Mus</taxon>
    </lineage>
</organism>
<accession>Q8BME9</accession>
<accession>Q505H5</accession>
<accession>Q8BMF0</accession>
<protein>
    <recommendedName>
        <fullName>Cerebellin-4</fullName>
    </recommendedName>
    <alternativeName>
        <fullName>Cerebellin-like glycoprotein 1</fullName>
    </alternativeName>
</protein>
<feature type="signal peptide" evidence="3">
    <location>
        <begin position="1"/>
        <end position="24"/>
    </location>
</feature>
<feature type="chain" id="PRO_0000003557" description="Cerebellin-4">
    <location>
        <begin position="25"/>
        <end position="198"/>
    </location>
</feature>
<feature type="domain" description="C1q" evidence="4">
    <location>
        <begin position="63"/>
        <end position="198"/>
    </location>
</feature>
<feature type="glycosylation site" description="N-linked (GlcNAc...) asparagine" evidence="7">
    <location>
        <position position="26"/>
    </location>
</feature>
<feature type="glycosylation site" description="N-linked (GlcNAc...) asparagine" evidence="7">
    <location>
        <position position="85"/>
    </location>
</feature>
<feature type="disulfide bond" description="Interchain" evidence="1">
    <location>
        <position position="37"/>
    </location>
</feature>
<feature type="disulfide bond" description="Interchain" evidence="1">
    <location>
        <position position="41"/>
    </location>
</feature>
<feature type="mutagenesis site" description="No effect on its ability to form homohexameric or heteromeric complexes with other CBLN family members. Increased interaction with NRXN1, NRXN3 and DCC. Shows interaction with NEO1, GRID1 and GRID2. Total loss of N-glycosylation; when associated with Q-85." evidence="7 11">
    <original>N</original>
    <variation>Q</variation>
    <location>
        <position position="26"/>
    </location>
</feature>
<feature type="mutagenesis site" description="No effect on its ability to form homohexameric or heteromeric complexes with other CBLN family members. Increased interaction with NRXN1, NRXN3 and DCC. Shows interaction with NEO1, GRID1 and GRID2. Total loss of N-glycosylation; when associated with Q-26." evidence="7 11">
    <original>N</original>
    <variation>Q</variation>
    <location>
        <position position="85"/>
    </location>
</feature>
<feature type="sequence conflict" description="In Ref. 1; BAC27855." evidence="14" ref="1">
    <original>P</original>
    <variation>T</variation>
    <location>
        <position position="112"/>
    </location>
</feature>
<feature type="strand" evidence="15">
    <location>
        <begin position="69"/>
        <end position="73"/>
    </location>
</feature>
<feature type="helix" evidence="15">
    <location>
        <begin position="82"/>
        <end position="87"/>
    </location>
</feature>
<feature type="strand" evidence="15">
    <location>
        <begin position="94"/>
        <end position="99"/>
    </location>
</feature>
<feature type="turn" evidence="15">
    <location>
        <begin position="105"/>
        <end position="107"/>
    </location>
</feature>
<feature type="strand" evidence="15">
    <location>
        <begin position="108"/>
        <end position="110"/>
    </location>
</feature>
<feature type="strand" evidence="15">
    <location>
        <begin position="112"/>
        <end position="127"/>
    </location>
</feature>
<feature type="strand" evidence="15">
    <location>
        <begin position="132"/>
        <end position="138"/>
    </location>
</feature>
<feature type="strand" evidence="15">
    <location>
        <begin position="141"/>
        <end position="148"/>
    </location>
</feature>
<feature type="strand" evidence="15">
    <location>
        <begin position="155"/>
        <end position="166"/>
    </location>
</feature>
<feature type="strand" evidence="15">
    <location>
        <begin position="171"/>
        <end position="179"/>
    </location>
</feature>
<feature type="strand" evidence="15">
    <location>
        <begin position="189"/>
        <end position="197"/>
    </location>
</feature>